<proteinExistence type="evidence at protein level"/>
<reference key="1">
    <citation type="journal article" date="1992" name="Appl. Environ. Microbiol.">
        <title>Cloning and expression of a conjugated bile acid hydrolase gene from Lactobacillus plantarum by using a direct plate assay.</title>
        <authorList>
            <person name="Christiaens H."/>
            <person name="Leer R.J."/>
            <person name="Pouwels P.H."/>
            <person name="Verstraete W."/>
        </authorList>
    </citation>
    <scope>NUCLEOTIDE SEQUENCE [GENOMIC DNA]</scope>
    <scope>FUNCTION</scope>
    <scope>CATALYTIC ACTIVITY</scope>
    <scope>BIOPHYSICOCHEMICAL PROPERTIES</scope>
    <source>
        <strain>DSM 4229 / 80</strain>
    </source>
</reference>
<reference key="2">
    <citation type="journal article" date="2003" name="Proc. Natl. Acad. Sci. U.S.A.">
        <title>Complete genome sequence of Lactobacillus plantarum WCFS1.</title>
        <authorList>
            <person name="Kleerebezem M."/>
            <person name="Boekhorst J."/>
            <person name="van Kranenburg R."/>
            <person name="Molenaar D."/>
            <person name="Kuipers O.P."/>
            <person name="Leer R."/>
            <person name="Tarchini R."/>
            <person name="Peters S.A."/>
            <person name="Sandbrink H.M."/>
            <person name="Fiers M.W.E.J."/>
            <person name="Stiekema W."/>
            <person name="Klein Lankhorst R.M."/>
            <person name="Bron P.A."/>
            <person name="Hoffer S.M."/>
            <person name="Nierop Groot M.N."/>
            <person name="Kerkhoven R."/>
            <person name="De Vries M."/>
            <person name="Ursing B."/>
            <person name="De Vos W.M."/>
            <person name="Siezen R.J."/>
        </authorList>
    </citation>
    <scope>NUCLEOTIDE SEQUENCE [LARGE SCALE GENOMIC DNA]</scope>
    <source>
        <strain>ATCC BAA-793 / NCIMB 8826 / WCFS1</strain>
    </source>
</reference>
<reference key="3">
    <citation type="journal article" date="2012" name="J. Bacteriol.">
        <title>Complete resequencing and reannotation of the Lactobacillus plantarum WCFS1 genome.</title>
        <authorList>
            <person name="Siezen R.J."/>
            <person name="Francke C."/>
            <person name="Renckens B."/>
            <person name="Boekhorst J."/>
            <person name="Wels M."/>
            <person name="Kleerebezem M."/>
            <person name="van Hijum S.A."/>
        </authorList>
    </citation>
    <scope>NUCLEOTIDE SEQUENCE [LARGE SCALE GENOMIC DNA]</scope>
    <scope>GENOME REANNOTATION</scope>
    <source>
        <strain>ATCC BAA-793 / NCIMB 8826 / WCFS1</strain>
    </source>
</reference>
<dbReference type="EC" id="2.3.1.-" evidence="3"/>
<dbReference type="EC" id="3.5.1.24" evidence="4"/>
<dbReference type="EC" id="3.5.1.-" evidence="4"/>
<dbReference type="EMBL" id="S51638">
    <property type="protein sequence ID" value="AAB24746.1"/>
    <property type="molecule type" value="Genomic_DNA"/>
</dbReference>
<dbReference type="EMBL" id="M96175">
    <property type="protein sequence ID" value="AAA25233.1"/>
    <property type="molecule type" value="Genomic_DNA"/>
</dbReference>
<dbReference type="EMBL" id="AL935263">
    <property type="protein sequence ID" value="CCC80500.1"/>
    <property type="molecule type" value="Genomic_DNA"/>
</dbReference>
<dbReference type="PIR" id="A48953">
    <property type="entry name" value="A48953"/>
</dbReference>
<dbReference type="RefSeq" id="WP_011102211.1">
    <property type="nucleotide sequence ID" value="NC_004567.2"/>
</dbReference>
<dbReference type="RefSeq" id="YP_004891014.1">
    <property type="nucleotide sequence ID" value="NC_004567.2"/>
</dbReference>
<dbReference type="SMR" id="Q06115"/>
<dbReference type="STRING" id="220668.lp_3536"/>
<dbReference type="MEROPS" id="C59.951"/>
<dbReference type="EnsemblBacteria" id="CCC80500">
    <property type="protein sequence ID" value="CCC80500"/>
    <property type="gene ID" value="lp_3536"/>
</dbReference>
<dbReference type="GeneID" id="77216564"/>
<dbReference type="KEGG" id="lpl:lp_3536"/>
<dbReference type="PATRIC" id="fig|220668.9.peg.2947"/>
<dbReference type="eggNOG" id="COG3049">
    <property type="taxonomic scope" value="Bacteria"/>
</dbReference>
<dbReference type="HOGENOM" id="CLU_045206_1_1_9"/>
<dbReference type="OrthoDB" id="9794717at2"/>
<dbReference type="PhylomeDB" id="Q06115"/>
<dbReference type="BRENDA" id="3.5.1.24">
    <property type="organism ID" value="2849"/>
</dbReference>
<dbReference type="UniPathway" id="UPA00221"/>
<dbReference type="Proteomes" id="UP000000432">
    <property type="component" value="Chromosome"/>
</dbReference>
<dbReference type="GO" id="GO:0047742">
    <property type="term" value="F:chenodeoxycholoyltaurine hydrolase activity"/>
    <property type="evidence" value="ECO:0007669"/>
    <property type="project" value="RHEA"/>
</dbReference>
<dbReference type="GO" id="GO:0045302">
    <property type="term" value="F:choloylglycine hydrolase activity"/>
    <property type="evidence" value="ECO:0007669"/>
    <property type="project" value="UniProtKB-EC"/>
</dbReference>
<dbReference type="GO" id="GO:0016740">
    <property type="term" value="F:transferase activity"/>
    <property type="evidence" value="ECO:0007669"/>
    <property type="project" value="UniProtKB-KW"/>
</dbReference>
<dbReference type="GO" id="GO:0006699">
    <property type="term" value="P:bile acid biosynthetic process"/>
    <property type="evidence" value="ECO:0007669"/>
    <property type="project" value="UniProtKB-UniPathway"/>
</dbReference>
<dbReference type="CDD" id="cd00542">
    <property type="entry name" value="Ntn_PVA"/>
    <property type="match status" value="1"/>
</dbReference>
<dbReference type="Gene3D" id="3.60.60.10">
    <property type="entry name" value="Penicillin V Acylase, Chain A"/>
    <property type="match status" value="1"/>
</dbReference>
<dbReference type="InterPro" id="IPR047711">
    <property type="entry name" value="CBAH"/>
</dbReference>
<dbReference type="InterPro" id="IPR029132">
    <property type="entry name" value="CBAH/NAAA_C"/>
</dbReference>
<dbReference type="InterPro" id="IPR029055">
    <property type="entry name" value="Ntn_hydrolases_N"/>
</dbReference>
<dbReference type="InterPro" id="IPR052193">
    <property type="entry name" value="Peptidase_C59"/>
</dbReference>
<dbReference type="NCBIfam" id="NF038245">
    <property type="entry name" value="bile_salt_hydro"/>
    <property type="match status" value="1"/>
</dbReference>
<dbReference type="PANTHER" id="PTHR35527">
    <property type="entry name" value="CHOLOYLGLYCINE HYDROLASE"/>
    <property type="match status" value="1"/>
</dbReference>
<dbReference type="PANTHER" id="PTHR35527:SF2">
    <property type="entry name" value="HYDROLASE"/>
    <property type="match status" value="1"/>
</dbReference>
<dbReference type="Pfam" id="PF02275">
    <property type="entry name" value="CBAH"/>
    <property type="match status" value="1"/>
</dbReference>
<dbReference type="SUPFAM" id="SSF56235">
    <property type="entry name" value="N-terminal nucleophile aminohydrolases (Ntn hydrolases)"/>
    <property type="match status" value="1"/>
</dbReference>
<keyword id="KW-0378">Hydrolase</keyword>
<keyword id="KW-0443">Lipid metabolism</keyword>
<keyword id="KW-1185">Reference proteome</keyword>
<keyword id="KW-0808">Transferase</keyword>
<name>CBH_LACPL</name>
<protein>
    <recommendedName>
        <fullName evidence="3">Bile salt hydrolase/transferase</fullName>
        <shortName evidence="3">BSH/T</shortName>
    </recommendedName>
    <alternativeName>
        <fullName evidence="3">Bile acid amine N-acyltransferase</fullName>
        <ecNumber evidence="3">2.3.1.-</ecNumber>
    </alternativeName>
    <alternativeName>
        <fullName>Bile salt hydrolase</fullName>
        <shortName>BSH</shortName>
    </alternativeName>
    <alternativeName>
        <fullName evidence="5">Choloylglycine hydrolase</fullName>
        <ecNumber evidence="4">3.5.1.24</ecNumber>
    </alternativeName>
    <alternativeName>
        <fullName evidence="5">Conjugated bile acid hydrolase</fullName>
        <ecNumber evidence="4">3.5.1.-</ecNumber>
    </alternativeName>
</protein>
<comment type="function">
    <text evidence="2 3 4">Possesses dual functions in bile acid metabolism (By similarity). Acts as a bile salt hydrolase that catalyzes the deconjugation of glycine- and taurine-linked bile salts, which occurs naturally in the intestines of animals, releasing amino acid residues and deconjugated bile salts (bile acids). Can hydrolyze the amide bond in the bile salts glycocholate (GCA), glycodeoxycholate (GDCA), glycochenodeoxycholate (GCDCA), taurocholate (TCA), taurodeoxycholate (TDCA) and taurochenodeoxycholate (TCDCA). Shows a preference for glycine-conjugated bile acids as substrates (PubMed:1476424). Also acts as an amine N-acyltransferase that conjugates a wide variety of amino acids to conjugated and non-conjugated bile acids, thus producing bacterial bile acid amidates (BBAAs) - also named microbially conjugated bile acids (MCBAs) - in the gastrointestinal tract (By similarity). These BBAAs may facilitate communication between the microbiota and host through the activation of host ligand-activated transcription factors (By similarity).</text>
</comment>
<comment type="catalytic activity">
    <reaction evidence="4">
        <text>glycocholate + H2O = cholate + glycine</text>
        <dbReference type="Rhea" id="RHEA:19353"/>
        <dbReference type="ChEBI" id="CHEBI:15377"/>
        <dbReference type="ChEBI" id="CHEBI:29746"/>
        <dbReference type="ChEBI" id="CHEBI:29747"/>
        <dbReference type="ChEBI" id="CHEBI:57305"/>
        <dbReference type="EC" id="3.5.1.24"/>
    </reaction>
    <physiologicalReaction direction="left-to-right" evidence="7">
        <dbReference type="Rhea" id="RHEA:19354"/>
    </physiologicalReaction>
</comment>
<comment type="catalytic activity">
    <reaction evidence="4">
        <text>glycodeoxycholate + H2O = deoxycholate + glycine</text>
        <dbReference type="Rhea" id="RHEA:47552"/>
        <dbReference type="ChEBI" id="CHEBI:15377"/>
        <dbReference type="ChEBI" id="CHEBI:23614"/>
        <dbReference type="ChEBI" id="CHEBI:57305"/>
        <dbReference type="ChEBI" id="CHEBI:82982"/>
    </reaction>
    <physiologicalReaction direction="left-to-right" evidence="7">
        <dbReference type="Rhea" id="RHEA:47553"/>
    </physiologicalReaction>
</comment>
<comment type="catalytic activity">
    <reaction evidence="4">
        <text>chenodeoxycholate + glycine = glycochenodeoxycholate + H2O</text>
        <dbReference type="Rhea" id="RHEA:47112"/>
        <dbReference type="ChEBI" id="CHEBI:15377"/>
        <dbReference type="ChEBI" id="CHEBI:36234"/>
        <dbReference type="ChEBI" id="CHEBI:36252"/>
        <dbReference type="ChEBI" id="CHEBI:57305"/>
    </reaction>
    <physiologicalReaction direction="right-to-left" evidence="7">
        <dbReference type="Rhea" id="RHEA:47114"/>
    </physiologicalReaction>
</comment>
<comment type="catalytic activity">
    <reaction evidence="4">
        <text>cholate + taurine = taurocholate + H2O</text>
        <dbReference type="Rhea" id="RHEA:47108"/>
        <dbReference type="ChEBI" id="CHEBI:15377"/>
        <dbReference type="ChEBI" id="CHEBI:29747"/>
        <dbReference type="ChEBI" id="CHEBI:36257"/>
        <dbReference type="ChEBI" id="CHEBI:507393"/>
    </reaction>
    <physiologicalReaction direction="right-to-left" evidence="7">
        <dbReference type="Rhea" id="RHEA:47110"/>
    </physiologicalReaction>
</comment>
<comment type="catalytic activity">
    <reaction evidence="4">
        <text>taurodeoxycholate + H2O = deoxycholate + taurine</text>
        <dbReference type="Rhea" id="RHEA:47556"/>
        <dbReference type="ChEBI" id="CHEBI:15377"/>
        <dbReference type="ChEBI" id="CHEBI:23614"/>
        <dbReference type="ChEBI" id="CHEBI:36261"/>
        <dbReference type="ChEBI" id="CHEBI:507393"/>
    </reaction>
    <physiologicalReaction direction="left-to-right" evidence="7">
        <dbReference type="Rhea" id="RHEA:47557"/>
    </physiologicalReaction>
</comment>
<comment type="catalytic activity">
    <reaction evidence="4">
        <text>taurochenodeoxycholate + H2O = chenodeoxycholate + taurine</text>
        <dbReference type="Rhea" id="RHEA:16309"/>
        <dbReference type="ChEBI" id="CHEBI:9407"/>
        <dbReference type="ChEBI" id="CHEBI:15377"/>
        <dbReference type="ChEBI" id="CHEBI:36234"/>
        <dbReference type="ChEBI" id="CHEBI:507393"/>
    </reaction>
    <physiologicalReaction direction="left-to-right" evidence="7">
        <dbReference type="Rhea" id="RHEA:16310"/>
    </physiologicalReaction>
</comment>
<comment type="catalytic activity">
    <reaction evidence="3">
        <text>an L-alpha-amino acid + cholate = an N-choloyl-L-alpha-amino acid + H2O</text>
        <dbReference type="Rhea" id="RHEA:79087"/>
        <dbReference type="ChEBI" id="CHEBI:15377"/>
        <dbReference type="ChEBI" id="CHEBI:29747"/>
        <dbReference type="ChEBI" id="CHEBI:59869"/>
        <dbReference type="ChEBI" id="CHEBI:229709"/>
    </reaction>
    <physiologicalReaction direction="left-to-right" evidence="3">
        <dbReference type="Rhea" id="RHEA:79088"/>
    </physiologicalReaction>
</comment>
<comment type="catalytic activity">
    <reaction evidence="3">
        <text>an L-alpha-amino acid + taurocholate = an N-choloyl-L-alpha-amino acid + taurine</text>
        <dbReference type="Rhea" id="RHEA:79091"/>
        <dbReference type="ChEBI" id="CHEBI:36257"/>
        <dbReference type="ChEBI" id="CHEBI:59869"/>
        <dbReference type="ChEBI" id="CHEBI:229709"/>
        <dbReference type="ChEBI" id="CHEBI:507393"/>
    </reaction>
    <physiologicalReaction direction="left-to-right" evidence="3">
        <dbReference type="Rhea" id="RHEA:79092"/>
    </physiologicalReaction>
</comment>
<comment type="catalytic activity">
    <reaction evidence="3">
        <text>glycocholate + an L-alpha-amino acid = an N-choloyl-L-alpha-amino acid + glycine</text>
        <dbReference type="Rhea" id="RHEA:79095"/>
        <dbReference type="ChEBI" id="CHEBI:29746"/>
        <dbReference type="ChEBI" id="CHEBI:57305"/>
        <dbReference type="ChEBI" id="CHEBI:59869"/>
        <dbReference type="ChEBI" id="CHEBI:229709"/>
    </reaction>
    <physiologicalReaction direction="left-to-right" evidence="3">
        <dbReference type="Rhea" id="RHEA:79096"/>
    </physiologicalReaction>
</comment>
<comment type="biophysicochemical properties">
    <kinetics>
        <KM evidence="4">0.22 mM for glycodeoxycholate</KM>
        <Vmax evidence="4">1.56 umol/min/mg enzyme for the hydrolysis of glycodeoxycholate</Vmax>
    </kinetics>
    <phDependence>
        <text evidence="4">Optimum pH is 4.7-5.5 for the hydrolase activity.</text>
    </phDependence>
    <temperatureDependence>
        <text evidence="4">Optimum temperature is 30-45 degrees Celsius for the hydrolase activity.</text>
    </temperatureDependence>
</comment>
<comment type="pathway">
    <text evidence="7">Lipid metabolism; bile acid biosynthesis.</text>
</comment>
<comment type="subunit">
    <text evidence="3">Homotetramer. The tetramer consists of a dimer of dimers.</text>
</comment>
<comment type="similarity">
    <text evidence="6">Belongs to the peptidase C59 family.</text>
</comment>
<gene>
    <name evidence="5" type="primary">cbh</name>
    <name type="synonym">bsh</name>
    <name type="ordered locus">lp_3536</name>
</gene>
<feature type="initiator methionine" description="Removed" evidence="1">
    <location>
        <position position="1"/>
    </location>
</feature>
<feature type="chain" id="PRO_0000073020" description="Bile salt hydrolase/transferase">
    <location>
        <begin position="2"/>
        <end position="324"/>
    </location>
</feature>
<feature type="active site" description="Nucleophile; acyl-thioester intermediate" evidence="3">
    <location>
        <position position="2"/>
    </location>
</feature>
<feature type="binding site" evidence="3">
    <location>
        <position position="2"/>
    </location>
    <ligand>
        <name>deoxycholate</name>
        <dbReference type="ChEBI" id="CHEBI:23614"/>
    </ligand>
</feature>
<feature type="binding site" evidence="3">
    <location>
        <position position="16"/>
    </location>
    <ligand>
        <name>deoxycholate</name>
        <dbReference type="ChEBI" id="CHEBI:23614"/>
    </ligand>
</feature>
<feature type="binding site" evidence="3">
    <location>
        <position position="79"/>
    </location>
    <ligand>
        <name>taurine</name>
        <dbReference type="ChEBI" id="CHEBI:507393"/>
    </ligand>
</feature>
<feature type="sequence conflict" description="In Ref. 1; AAB24746/AAA25233." evidence="6" ref="1">
    <original>S</original>
    <variation>P</variation>
    <location>
        <position position="236"/>
    </location>
</feature>
<feature type="sequence conflict" description="In Ref. 1; AAB24746/AAA25233." evidence="6" ref="1">
    <original>S</original>
    <variation>N</variation>
    <location>
        <position position="298"/>
    </location>
</feature>
<evidence type="ECO:0000250" key="1"/>
<evidence type="ECO:0000250" key="2">
    <source>
        <dbReference type="UniProtKB" id="P0DXD2"/>
    </source>
</evidence>
<evidence type="ECO:0000250" key="3">
    <source>
        <dbReference type="UniProtKB" id="P54965"/>
    </source>
</evidence>
<evidence type="ECO:0000269" key="4">
    <source>
    </source>
</evidence>
<evidence type="ECO:0000303" key="5">
    <source>
    </source>
</evidence>
<evidence type="ECO:0000305" key="6"/>
<evidence type="ECO:0000305" key="7">
    <source>
    </source>
</evidence>
<accession>Q06115</accession>
<accession>F9UUJ8</accession>
<organism>
    <name type="scientific">Lactiplantibacillus plantarum (strain ATCC BAA-793 / NCIMB 8826 / WCFS1)</name>
    <name type="common">Lactobacillus plantarum</name>
    <dbReference type="NCBI Taxonomy" id="220668"/>
    <lineage>
        <taxon>Bacteria</taxon>
        <taxon>Bacillati</taxon>
        <taxon>Bacillota</taxon>
        <taxon>Bacilli</taxon>
        <taxon>Lactobacillales</taxon>
        <taxon>Lactobacillaceae</taxon>
        <taxon>Lactiplantibacillus</taxon>
    </lineage>
</organism>
<sequence length="324" mass="37042">MCTAITYQSYNNYFGRNFDYEISYNEMVTITPRKYPLVFRKVENLDHHYAIIGITADVESYPLYYDAMNEKGLCIAGLNFAGYADYKKYDADKVNITPFELIPWLLGQFSSVREVKKNIQKLNLVNINFSEQLPLSPLHWLVADKQESIVIESVKEGLKIYDNPVGVLTNNPNFDYQLFNLNNYRALSNSTPQNSFSEKVDLDSYSRGMGGLGLPGDLSSMSRFVRAAFTKLNSLSMQTESGSVSQFFHILGSVEQQKGLCEVTDGKYEYTIYSSCCDMDKGVYYYRTYDNSQINSVSLNHEHLDTTELISYPLRSEAQYYAVN</sequence>